<comment type="function">
    <text evidence="1">Part of a stress-induced multi-chaperone system, it is involved in the recovery of the cell from heat-induced damage, in cooperation with DnaK, DnaJ and GrpE. Acts before DnaK, in the processing of protein aggregates. Protein binding stimulates the ATPase activity; ATP hydrolysis unfolds the denatured protein aggregates, which probably helps expose new hydrophobic binding sites on the surface of ClpB-bound aggregates, contributing to the solubilization and refolding of denatured protein aggregates by DnaK (By similarity).</text>
</comment>
<comment type="subunit">
    <text evidence="1">Homohexamer. The oligomerization is ATP-dependent (By similarity).</text>
</comment>
<comment type="subcellular location">
    <subcellularLocation>
        <location evidence="3">Cytoplasm</location>
    </subcellularLocation>
</comment>
<comment type="domain">
    <text evidence="1">The Clp repeat (R) domain probably functions as a substrate-discriminating domain, recruiting aggregated proteins to the ClpB hexamer and/or stabilizing bound proteins. The NBD2 domain is responsible for oligomerization, whereas the NBD1 domain stabilizes the hexamer probably in an ATP-dependent manner. The movement of the coiled-coil domain is essential for ClpB ability to rescue proteins from an aggregated state, probably by pulling apart large aggregated proteins, which are bound between the coiled-coils motifs of adjacent ClpB subunits in the functional hexamer (By similarity).</text>
</comment>
<comment type="similarity">
    <text evidence="3">Belongs to the ClpA/ClpB family.</text>
</comment>
<organism>
    <name type="scientific">Streptomyces avermitilis (strain ATCC 31267 / DSM 46492 / JCM 5070 / NBRC 14893 / NCIMB 12804 / NRRL 8165 / MA-4680)</name>
    <dbReference type="NCBI Taxonomy" id="227882"/>
    <lineage>
        <taxon>Bacteria</taxon>
        <taxon>Bacillati</taxon>
        <taxon>Actinomycetota</taxon>
        <taxon>Actinomycetes</taxon>
        <taxon>Kitasatosporales</taxon>
        <taxon>Streptomycetaceae</taxon>
        <taxon>Streptomyces</taxon>
    </lineage>
</organism>
<proteinExistence type="inferred from homology"/>
<sequence length="870" mass="95043">MDAELTNRSRDAINAATNRAVSEGHPDLTPAHLLLALLGGKDNENITDLLAAVDADQAAVRAGTERVLAKLPSVTGSTVAPPQPNRELLAVVADASQRAQDLGDDFLSTEHLLIGIAANGGAAGDVLSQQGASAKKLLEAFQKTRGGRRVTTPDPEGQYKALEKFGTDFTAAARDGKLDPVIGRDQEIRRVVQVLSRRTKNNPVLIGEPGVGKTAVVEGLAQRIVKGDVPESLKNKRLVALDLGAMVAGAKYRGEFEERLKTVLAEIKDSDGQIITFIDELHTVVGAGAGGDSAMDAGNMLKPMLARGELRMVGATTLDEYRERIEKDPALERRFQQVLVAEPSVEDTIAILRGLKGRYEAHHKVQIADSALVAAAALSDRYITSRFLPDKAIDLVDEAASRLRMEIDSSPVEIDELQRQVDRLKMEELAIGKETDAASRERLEKLRRDLADKEEELRGLTARWEKEKQSLNRVGELKEKLDELRGQAERAQRDGDFDTASKLLYGEIPALERDLEEASEAEEEAARDTMVKEEVGPDDIADVVGSWTGIPAGRLLEGETQKLLRMEEELGHRLIGQSEAVQAVSDAVRRTRAGIADPDRPTGSFLFLGPTGVGKTELAKALADFLFDDERAMVRIDMSEYGEKHTVARLVGAPPGYVGYEEGGQLTEAVRRRPYSVVLLDEVEKAHPEVFDILLQVLDDGRLTDGQGRTVDFRNTILILTSNLGSQFLSGHGPAEPQTSEEEKKRQVLEVVRASFKPEFLNRLDDLVVFSALNRQELERIAKLQIDRLAQRLAQRRLRLEVTDAALAWLAEEGNDPAYGARPLRRLVQTAIGDRLAKEILAGEVKDGDTVRVDAFGEGLIVGPATGKTL</sequence>
<feature type="chain" id="PRO_0000191183" description="Chaperone protein ClpB 1">
    <location>
        <begin position="1"/>
        <end position="870"/>
    </location>
</feature>
<feature type="domain" description="Clp R" evidence="2">
    <location>
        <begin position="1"/>
        <end position="147"/>
    </location>
</feature>
<feature type="region of interest" description="Repeat 1" evidence="2">
    <location>
        <begin position="5"/>
        <end position="71"/>
    </location>
</feature>
<feature type="region of interest" description="Repeat 2" evidence="2">
    <location>
        <begin position="84"/>
        <end position="147"/>
    </location>
</feature>
<feature type="region of interest" description="NBD1" evidence="1">
    <location>
        <begin position="160"/>
        <end position="342"/>
    </location>
</feature>
<feature type="region of interest" description="Linker" evidence="1">
    <location>
        <begin position="343"/>
        <end position="549"/>
    </location>
</feature>
<feature type="region of interest" description="NBD2" evidence="1">
    <location>
        <begin position="559"/>
        <end position="772"/>
    </location>
</feature>
<feature type="region of interest" description="C-terminal" evidence="1">
    <location>
        <begin position="773"/>
        <end position="870"/>
    </location>
</feature>
<feature type="coiled-coil region" evidence="1">
    <location>
        <begin position="393"/>
        <end position="527"/>
    </location>
</feature>
<feature type="binding site" evidence="1">
    <location>
        <begin position="207"/>
        <end position="214"/>
    </location>
    <ligand>
        <name>ATP</name>
        <dbReference type="ChEBI" id="CHEBI:30616"/>
        <label>1</label>
    </ligand>
</feature>
<feature type="binding site" evidence="1">
    <location>
        <begin position="609"/>
        <end position="616"/>
    </location>
    <ligand>
        <name>ATP</name>
        <dbReference type="ChEBI" id="CHEBI:30616"/>
        <label>2</label>
    </ligand>
</feature>
<reference key="1">
    <citation type="journal article" date="2001" name="Proc. Natl. Acad. Sci. U.S.A.">
        <title>Genome sequence of an industrial microorganism Streptomyces avermitilis: deducing the ability of producing secondary metabolites.</title>
        <authorList>
            <person name="Omura S."/>
            <person name="Ikeda H."/>
            <person name="Ishikawa J."/>
            <person name="Hanamoto A."/>
            <person name="Takahashi C."/>
            <person name="Shinose M."/>
            <person name="Takahashi Y."/>
            <person name="Horikawa H."/>
            <person name="Nakazawa H."/>
            <person name="Osonoe T."/>
            <person name="Kikuchi H."/>
            <person name="Shiba T."/>
            <person name="Sakaki Y."/>
            <person name="Hattori M."/>
        </authorList>
    </citation>
    <scope>NUCLEOTIDE SEQUENCE [LARGE SCALE GENOMIC DNA]</scope>
    <source>
        <strain>ATCC 31267 / DSM 46492 / JCM 5070 / NBRC 14893 / NCIMB 12804 / NRRL 8165 / MA-4680</strain>
    </source>
</reference>
<reference key="2">
    <citation type="journal article" date="2003" name="Nat. Biotechnol.">
        <title>Complete genome sequence and comparative analysis of the industrial microorganism Streptomyces avermitilis.</title>
        <authorList>
            <person name="Ikeda H."/>
            <person name="Ishikawa J."/>
            <person name="Hanamoto A."/>
            <person name="Shinose M."/>
            <person name="Kikuchi H."/>
            <person name="Shiba T."/>
            <person name="Sakaki Y."/>
            <person name="Hattori M."/>
            <person name="Omura S."/>
        </authorList>
    </citation>
    <scope>NUCLEOTIDE SEQUENCE [LARGE SCALE GENOMIC DNA]</scope>
    <source>
        <strain>ATCC 31267 / DSM 46492 / JCM 5070 / NBRC 14893 / NCIMB 12804 / NRRL 8165 / MA-4680</strain>
    </source>
</reference>
<evidence type="ECO:0000250" key="1"/>
<evidence type="ECO:0000255" key="2">
    <source>
        <dbReference type="PROSITE-ProRule" id="PRU01251"/>
    </source>
</evidence>
<evidence type="ECO:0000305" key="3"/>
<name>CLPB1_STRAW</name>
<accession>Q82EU9</accession>
<keyword id="KW-0067">ATP-binding</keyword>
<keyword id="KW-0143">Chaperone</keyword>
<keyword id="KW-0175">Coiled coil</keyword>
<keyword id="KW-0963">Cytoplasm</keyword>
<keyword id="KW-0547">Nucleotide-binding</keyword>
<keyword id="KW-1185">Reference proteome</keyword>
<keyword id="KW-0677">Repeat</keyword>
<keyword id="KW-0346">Stress response</keyword>
<gene>
    <name type="primary">clpB1</name>
    <name type="ordered locus">SAV_4514</name>
</gene>
<dbReference type="EMBL" id="BA000030">
    <property type="protein sequence ID" value="BAC72226.1"/>
    <property type="molecule type" value="Genomic_DNA"/>
</dbReference>
<dbReference type="SMR" id="Q82EU9"/>
<dbReference type="GeneID" id="41541593"/>
<dbReference type="KEGG" id="sma:SAVERM_4514"/>
<dbReference type="eggNOG" id="COG0542">
    <property type="taxonomic scope" value="Bacteria"/>
</dbReference>
<dbReference type="HOGENOM" id="CLU_005070_4_1_11"/>
<dbReference type="OrthoDB" id="9803641at2"/>
<dbReference type="Proteomes" id="UP000000428">
    <property type="component" value="Chromosome"/>
</dbReference>
<dbReference type="GO" id="GO:0005737">
    <property type="term" value="C:cytoplasm"/>
    <property type="evidence" value="ECO:0007669"/>
    <property type="project" value="UniProtKB-SubCell"/>
</dbReference>
<dbReference type="GO" id="GO:0005524">
    <property type="term" value="F:ATP binding"/>
    <property type="evidence" value="ECO:0007669"/>
    <property type="project" value="UniProtKB-KW"/>
</dbReference>
<dbReference type="GO" id="GO:0016887">
    <property type="term" value="F:ATP hydrolysis activity"/>
    <property type="evidence" value="ECO:0007669"/>
    <property type="project" value="InterPro"/>
</dbReference>
<dbReference type="GO" id="GO:0034605">
    <property type="term" value="P:cellular response to heat"/>
    <property type="evidence" value="ECO:0007669"/>
    <property type="project" value="TreeGrafter"/>
</dbReference>
<dbReference type="GO" id="GO:0042026">
    <property type="term" value="P:protein refolding"/>
    <property type="evidence" value="ECO:0007669"/>
    <property type="project" value="InterPro"/>
</dbReference>
<dbReference type="CDD" id="cd00009">
    <property type="entry name" value="AAA"/>
    <property type="match status" value="1"/>
</dbReference>
<dbReference type="CDD" id="cd19499">
    <property type="entry name" value="RecA-like_ClpB_Hsp104-like"/>
    <property type="match status" value="1"/>
</dbReference>
<dbReference type="FunFam" id="1.10.8.60:FF:000017">
    <property type="entry name" value="ATP-dependent chaperone ClpB"/>
    <property type="match status" value="1"/>
</dbReference>
<dbReference type="FunFam" id="3.40.50.300:FF:000120">
    <property type="entry name" value="ATP-dependent chaperone ClpB"/>
    <property type="match status" value="1"/>
</dbReference>
<dbReference type="FunFam" id="3.40.50.300:FF:000025">
    <property type="entry name" value="ATP-dependent Clp protease subunit"/>
    <property type="match status" value="1"/>
</dbReference>
<dbReference type="FunFam" id="3.40.50.300:FF:000010">
    <property type="entry name" value="Chaperone clpB 1, putative"/>
    <property type="match status" value="1"/>
</dbReference>
<dbReference type="Gene3D" id="1.10.8.60">
    <property type="match status" value="1"/>
</dbReference>
<dbReference type="Gene3D" id="1.10.1780.10">
    <property type="entry name" value="Clp, N-terminal domain"/>
    <property type="match status" value="1"/>
</dbReference>
<dbReference type="Gene3D" id="3.40.50.300">
    <property type="entry name" value="P-loop containing nucleotide triphosphate hydrolases"/>
    <property type="match status" value="3"/>
</dbReference>
<dbReference type="InterPro" id="IPR003593">
    <property type="entry name" value="AAA+_ATPase"/>
</dbReference>
<dbReference type="InterPro" id="IPR003959">
    <property type="entry name" value="ATPase_AAA_core"/>
</dbReference>
<dbReference type="InterPro" id="IPR017730">
    <property type="entry name" value="Chaperonin_ClpB"/>
</dbReference>
<dbReference type="InterPro" id="IPR019489">
    <property type="entry name" value="Clp_ATPase_C"/>
</dbReference>
<dbReference type="InterPro" id="IPR036628">
    <property type="entry name" value="Clp_N_dom_sf"/>
</dbReference>
<dbReference type="InterPro" id="IPR004176">
    <property type="entry name" value="Clp_R_dom"/>
</dbReference>
<dbReference type="InterPro" id="IPR001270">
    <property type="entry name" value="ClpA/B"/>
</dbReference>
<dbReference type="InterPro" id="IPR018368">
    <property type="entry name" value="ClpA/B_CS1"/>
</dbReference>
<dbReference type="InterPro" id="IPR028299">
    <property type="entry name" value="ClpA/B_CS2"/>
</dbReference>
<dbReference type="InterPro" id="IPR041546">
    <property type="entry name" value="ClpA/ClpB_AAA_lid"/>
</dbReference>
<dbReference type="InterPro" id="IPR050130">
    <property type="entry name" value="ClpA_ClpB"/>
</dbReference>
<dbReference type="InterPro" id="IPR027417">
    <property type="entry name" value="P-loop_NTPase"/>
</dbReference>
<dbReference type="NCBIfam" id="TIGR03346">
    <property type="entry name" value="chaperone_ClpB"/>
    <property type="match status" value="1"/>
</dbReference>
<dbReference type="PANTHER" id="PTHR11638">
    <property type="entry name" value="ATP-DEPENDENT CLP PROTEASE"/>
    <property type="match status" value="1"/>
</dbReference>
<dbReference type="PANTHER" id="PTHR11638:SF18">
    <property type="entry name" value="HEAT SHOCK PROTEIN 104"/>
    <property type="match status" value="1"/>
</dbReference>
<dbReference type="Pfam" id="PF00004">
    <property type="entry name" value="AAA"/>
    <property type="match status" value="1"/>
</dbReference>
<dbReference type="Pfam" id="PF07724">
    <property type="entry name" value="AAA_2"/>
    <property type="match status" value="1"/>
</dbReference>
<dbReference type="Pfam" id="PF17871">
    <property type="entry name" value="AAA_lid_9"/>
    <property type="match status" value="1"/>
</dbReference>
<dbReference type="Pfam" id="PF02861">
    <property type="entry name" value="Clp_N"/>
    <property type="match status" value="2"/>
</dbReference>
<dbReference type="Pfam" id="PF10431">
    <property type="entry name" value="ClpB_D2-small"/>
    <property type="match status" value="1"/>
</dbReference>
<dbReference type="PRINTS" id="PR00300">
    <property type="entry name" value="CLPPROTEASEA"/>
</dbReference>
<dbReference type="SMART" id="SM00382">
    <property type="entry name" value="AAA"/>
    <property type="match status" value="2"/>
</dbReference>
<dbReference type="SMART" id="SM01086">
    <property type="entry name" value="ClpB_D2-small"/>
    <property type="match status" value="1"/>
</dbReference>
<dbReference type="SUPFAM" id="SSF81923">
    <property type="entry name" value="Double Clp-N motif"/>
    <property type="match status" value="1"/>
</dbReference>
<dbReference type="SUPFAM" id="SSF52540">
    <property type="entry name" value="P-loop containing nucleoside triphosphate hydrolases"/>
    <property type="match status" value="2"/>
</dbReference>
<dbReference type="PROSITE" id="PS51903">
    <property type="entry name" value="CLP_R"/>
    <property type="match status" value="1"/>
</dbReference>
<dbReference type="PROSITE" id="PS00870">
    <property type="entry name" value="CLPAB_1"/>
    <property type="match status" value="1"/>
</dbReference>
<dbReference type="PROSITE" id="PS00871">
    <property type="entry name" value="CLPAB_2"/>
    <property type="match status" value="1"/>
</dbReference>
<protein>
    <recommendedName>
        <fullName>Chaperone protein ClpB 1</fullName>
    </recommendedName>
</protein>